<accession>O84353</accession>
<evidence type="ECO:0000255" key="1">
    <source>
        <dbReference type="HAMAP-Rule" id="MF_00528"/>
    </source>
</evidence>
<reference key="1">
    <citation type="journal article" date="1998" name="Science">
        <title>Genome sequence of an obligate intracellular pathogen of humans: Chlamydia trachomatis.</title>
        <authorList>
            <person name="Stephens R.S."/>
            <person name="Kalman S."/>
            <person name="Lammel C.J."/>
            <person name="Fan J."/>
            <person name="Marathe R."/>
            <person name="Aravind L."/>
            <person name="Mitchell W.P."/>
            <person name="Olinger L."/>
            <person name="Tatusov R.L."/>
            <person name="Zhao Q."/>
            <person name="Koonin E.V."/>
            <person name="Davis R.W."/>
        </authorList>
    </citation>
    <scope>NUCLEOTIDE SEQUENCE [LARGE SCALE GENOMIC DNA]</scope>
    <source>
        <strain>ATCC VR-885 / DSM 19411 / UW-3/Cx</strain>
    </source>
</reference>
<comment type="function">
    <text evidence="1">Nucleoside triphosphate pyrophosphatase that hydrolyzes dTTP and UTP. May have a dual role in cell division arrest and in preventing the incorporation of modified nucleotides into cellular nucleic acids.</text>
</comment>
<comment type="catalytic activity">
    <reaction evidence="1">
        <text>dTTP + H2O = dTMP + diphosphate + H(+)</text>
        <dbReference type="Rhea" id="RHEA:28534"/>
        <dbReference type="ChEBI" id="CHEBI:15377"/>
        <dbReference type="ChEBI" id="CHEBI:15378"/>
        <dbReference type="ChEBI" id="CHEBI:33019"/>
        <dbReference type="ChEBI" id="CHEBI:37568"/>
        <dbReference type="ChEBI" id="CHEBI:63528"/>
        <dbReference type="EC" id="3.6.1.9"/>
    </reaction>
</comment>
<comment type="catalytic activity">
    <reaction evidence="1">
        <text>UTP + H2O = UMP + diphosphate + H(+)</text>
        <dbReference type="Rhea" id="RHEA:29395"/>
        <dbReference type="ChEBI" id="CHEBI:15377"/>
        <dbReference type="ChEBI" id="CHEBI:15378"/>
        <dbReference type="ChEBI" id="CHEBI:33019"/>
        <dbReference type="ChEBI" id="CHEBI:46398"/>
        <dbReference type="ChEBI" id="CHEBI:57865"/>
        <dbReference type="EC" id="3.6.1.9"/>
    </reaction>
</comment>
<comment type="cofactor">
    <cofactor evidence="1">
        <name>a divalent metal cation</name>
        <dbReference type="ChEBI" id="CHEBI:60240"/>
    </cofactor>
</comment>
<comment type="subcellular location">
    <subcellularLocation>
        <location evidence="1">Cytoplasm</location>
    </subcellularLocation>
</comment>
<comment type="similarity">
    <text evidence="1">Belongs to the Maf family. YhdE subfamily.</text>
</comment>
<protein>
    <recommendedName>
        <fullName evidence="1">dTTP/UTP pyrophosphatase</fullName>
        <shortName evidence="1">dTTPase/UTPase</shortName>
        <ecNumber evidence="1">3.6.1.9</ecNumber>
    </recommendedName>
    <alternativeName>
        <fullName evidence="1">Nucleoside triphosphate pyrophosphatase</fullName>
    </alternativeName>
    <alternativeName>
        <fullName evidence="1">Nucleotide pyrophosphatase</fullName>
        <shortName evidence="1">Nucleotide PPase</shortName>
    </alternativeName>
</protein>
<name>NTPPA_CHLTR</name>
<gene>
    <name type="ordered locus">CT_349</name>
</gene>
<feature type="chain" id="PRO_0000123011" description="dTTP/UTP pyrophosphatase">
    <location>
        <begin position="1"/>
        <end position="196"/>
    </location>
</feature>
<feature type="active site" description="Proton acceptor" evidence="1">
    <location>
        <position position="72"/>
    </location>
</feature>
<feature type="site" description="Important for substrate specificity" evidence="1">
    <location>
        <position position="13"/>
    </location>
</feature>
<feature type="site" description="Important for substrate specificity" evidence="1">
    <location>
        <position position="73"/>
    </location>
</feature>
<feature type="site" description="Important for substrate specificity" evidence="1">
    <location>
        <position position="155"/>
    </location>
</feature>
<keyword id="KW-0963">Cytoplasm</keyword>
<keyword id="KW-0378">Hydrolase</keyword>
<keyword id="KW-0546">Nucleotide metabolism</keyword>
<keyword id="KW-1185">Reference proteome</keyword>
<organism>
    <name type="scientific">Chlamydia trachomatis serovar D (strain ATCC VR-885 / DSM 19411 / UW-3/Cx)</name>
    <dbReference type="NCBI Taxonomy" id="272561"/>
    <lineage>
        <taxon>Bacteria</taxon>
        <taxon>Pseudomonadati</taxon>
        <taxon>Chlamydiota</taxon>
        <taxon>Chlamydiia</taxon>
        <taxon>Chlamydiales</taxon>
        <taxon>Chlamydiaceae</taxon>
        <taxon>Chlamydia/Chlamydophila group</taxon>
        <taxon>Chlamydia</taxon>
    </lineage>
</organism>
<proteinExistence type="inferred from homology"/>
<dbReference type="EC" id="3.6.1.9" evidence="1"/>
<dbReference type="EMBL" id="AE001273">
    <property type="protein sequence ID" value="AAC67944.1"/>
    <property type="molecule type" value="Genomic_DNA"/>
</dbReference>
<dbReference type="PIR" id="F71525">
    <property type="entry name" value="F71525"/>
</dbReference>
<dbReference type="RefSeq" id="WP_009871700.1">
    <property type="nucleotide sequence ID" value="NC_000117.1"/>
</dbReference>
<dbReference type="SMR" id="O84353"/>
<dbReference type="FunCoup" id="O84353">
    <property type="interactions" value="216"/>
</dbReference>
<dbReference type="STRING" id="272561.CT_349"/>
<dbReference type="EnsemblBacteria" id="AAC67944">
    <property type="protein sequence ID" value="AAC67944"/>
    <property type="gene ID" value="CT_349"/>
</dbReference>
<dbReference type="KEGG" id="ctr:CT_349"/>
<dbReference type="PATRIC" id="fig|272561.5.peg.377"/>
<dbReference type="HOGENOM" id="CLU_040416_0_0_0"/>
<dbReference type="InParanoid" id="O84353"/>
<dbReference type="OrthoDB" id="9807767at2"/>
<dbReference type="Proteomes" id="UP000000431">
    <property type="component" value="Chromosome"/>
</dbReference>
<dbReference type="GO" id="GO:0005737">
    <property type="term" value="C:cytoplasm"/>
    <property type="evidence" value="ECO:0007669"/>
    <property type="project" value="UniProtKB-SubCell"/>
</dbReference>
<dbReference type="GO" id="GO:0036218">
    <property type="term" value="F:dTTP diphosphatase activity"/>
    <property type="evidence" value="ECO:0007669"/>
    <property type="project" value="RHEA"/>
</dbReference>
<dbReference type="GO" id="GO:0047429">
    <property type="term" value="F:nucleoside triphosphate diphosphatase activity"/>
    <property type="evidence" value="ECO:0000318"/>
    <property type="project" value="GO_Central"/>
</dbReference>
<dbReference type="GO" id="GO:0036221">
    <property type="term" value="F:UTP diphosphatase activity"/>
    <property type="evidence" value="ECO:0007669"/>
    <property type="project" value="RHEA"/>
</dbReference>
<dbReference type="GO" id="GO:0009117">
    <property type="term" value="P:nucleotide metabolic process"/>
    <property type="evidence" value="ECO:0007669"/>
    <property type="project" value="UniProtKB-KW"/>
</dbReference>
<dbReference type="CDD" id="cd00555">
    <property type="entry name" value="Maf"/>
    <property type="match status" value="1"/>
</dbReference>
<dbReference type="FunFam" id="3.90.950.10:FF:000018">
    <property type="entry name" value="dTTP/UTP pyrophosphatase"/>
    <property type="match status" value="1"/>
</dbReference>
<dbReference type="Gene3D" id="3.90.950.10">
    <property type="match status" value="1"/>
</dbReference>
<dbReference type="HAMAP" id="MF_00528">
    <property type="entry name" value="Maf"/>
    <property type="match status" value="1"/>
</dbReference>
<dbReference type="InterPro" id="IPR029001">
    <property type="entry name" value="ITPase-like_fam"/>
</dbReference>
<dbReference type="InterPro" id="IPR003697">
    <property type="entry name" value="Maf-like"/>
</dbReference>
<dbReference type="NCBIfam" id="TIGR00172">
    <property type="entry name" value="maf"/>
    <property type="match status" value="1"/>
</dbReference>
<dbReference type="PANTHER" id="PTHR43213">
    <property type="entry name" value="BIFUNCTIONAL DTTP/UTP PYROPHOSPHATASE/METHYLTRANSFERASE PROTEIN-RELATED"/>
    <property type="match status" value="1"/>
</dbReference>
<dbReference type="PANTHER" id="PTHR43213:SF5">
    <property type="entry name" value="BIFUNCTIONAL DTTP_UTP PYROPHOSPHATASE_METHYLTRANSFERASE PROTEIN-RELATED"/>
    <property type="match status" value="1"/>
</dbReference>
<dbReference type="Pfam" id="PF02545">
    <property type="entry name" value="Maf"/>
    <property type="match status" value="1"/>
</dbReference>
<dbReference type="PIRSF" id="PIRSF006305">
    <property type="entry name" value="Maf"/>
    <property type="match status" value="1"/>
</dbReference>
<dbReference type="SUPFAM" id="SSF52972">
    <property type="entry name" value="ITPase-like"/>
    <property type="match status" value="1"/>
</dbReference>
<sequence length="196" mass="21978">MEARLVLGSSSERRKAVLESFRIPFICVSPDFDERSIVYSGDPFEYTKELAWNKANVVRSQGFSDALIITADTVVVYKGEVFNKPESEEHAVEMLRTLSGSSHSVITTLVLMQNEKVLSASENTQVSFIDIPPQHLKTYVRSFSSLKRCGGYCVQDGGGLIIKQIEGCVYNIQGLPIKTLNQLLMEFNISLWDYLV</sequence>